<accession>P08817</accession>
<feature type="transit peptide" description="Chloroplast" evidence="3">
    <location>
        <begin position="1"/>
        <end position="49"/>
    </location>
</feature>
<feature type="chain" id="PRO_0000000582" description="Acyl carrier protein 2, chloroplastic">
    <location>
        <begin position="50"/>
        <end position="129"/>
    </location>
</feature>
<feature type="domain" description="Carrier" evidence="2">
    <location>
        <begin position="52"/>
        <end position="127"/>
    </location>
</feature>
<feature type="modified residue" description="O-(pantetheine 4'-phosphoryl)serine" evidence="2">
    <location>
        <position position="87"/>
    </location>
</feature>
<feature type="sequence conflict" description="In Ref. 2; AA sequence." evidence="4" ref="2">
    <original>T</original>
    <variation>D</variation>
    <location>
        <position position="72"/>
    </location>
</feature>
<reference key="1">
    <citation type="journal article" date="1991" name="Plant Physiol.">
        <title>Barley acyl carrier protein II: nucleotide sequence of cDNA clones and chromosomal location of the Acl2 gene.</title>
        <authorList>
            <person name="Hansen L."/>
            <person name="Kauppinen S."/>
        </authorList>
    </citation>
    <scope>NUCLEOTIDE SEQUENCE [MRNA]</scope>
    <source>
        <strain>cv. Svalofs Bonus</strain>
    </source>
</reference>
<reference key="2">
    <citation type="journal article" date="1984" name="Carlsberg Res. Commun.">
        <title>Barley chloroplasts contain two acyl carrier proteins coded for by different genes.</title>
        <authorList>
            <person name="Hoej P.B."/>
            <person name="Svendsen I."/>
        </authorList>
    </citation>
    <scope>PROTEIN SEQUENCE OF 50-73</scope>
    <source>
        <strain>cv. Svalofs Bonus</strain>
    </source>
</reference>
<protein>
    <recommendedName>
        <fullName>Acyl carrier protein 2, chloroplastic</fullName>
    </recommendedName>
    <alternativeName>
        <fullName>Acyl carrier protein II</fullName>
        <shortName>ACP II</shortName>
    </alternativeName>
</protein>
<gene>
    <name type="primary">ACL1.2</name>
    <name type="synonym">ACL2</name>
</gene>
<evidence type="ECO:0000250" key="1"/>
<evidence type="ECO:0000255" key="2">
    <source>
        <dbReference type="PROSITE-ProRule" id="PRU00258"/>
    </source>
</evidence>
<evidence type="ECO:0000269" key="3">
    <source ref="2"/>
</evidence>
<evidence type="ECO:0000305" key="4"/>
<name>ACP2_HORVU</name>
<proteinExistence type="evidence at protein level"/>
<comment type="function">
    <text>Carrier of the growing fatty acid chain in fatty acid biosynthesis.</text>
</comment>
<comment type="pathway">
    <text>Lipid metabolism; fatty acid biosynthesis.</text>
</comment>
<comment type="subcellular location">
    <subcellularLocation>
        <location>Plastid</location>
        <location>Chloroplast</location>
    </subcellularLocation>
</comment>
<comment type="PTM">
    <text evidence="1">4'-phosphopantetheine is transferred from CoA to a specific serine of apo-ACP by acpS. This modification is essential for activity because fatty acids are bound in thioester linkage to the sulfhydryl of the prosthetic group (By similarity).</text>
</comment>
<comment type="similarity">
    <text evidence="4">Belongs to the acyl carrier protein (ACP) family.</text>
</comment>
<dbReference type="EMBL" id="M63799">
    <property type="protein sequence ID" value="AAA32921.1"/>
    <property type="molecule type" value="mRNA"/>
</dbReference>
<dbReference type="PIR" id="T10175">
    <property type="entry name" value="T10175"/>
</dbReference>
<dbReference type="SMR" id="P08817"/>
<dbReference type="UniPathway" id="UPA00094"/>
<dbReference type="ExpressionAtlas" id="P08817">
    <property type="expression patterns" value="baseline and differential"/>
</dbReference>
<dbReference type="GO" id="GO:0009507">
    <property type="term" value="C:chloroplast"/>
    <property type="evidence" value="ECO:0007669"/>
    <property type="project" value="UniProtKB-SubCell"/>
</dbReference>
<dbReference type="GO" id="GO:0000036">
    <property type="term" value="F:acyl carrier activity"/>
    <property type="evidence" value="ECO:0007669"/>
    <property type="project" value="InterPro"/>
</dbReference>
<dbReference type="GO" id="GO:0031177">
    <property type="term" value="F:phosphopantetheine binding"/>
    <property type="evidence" value="ECO:0007669"/>
    <property type="project" value="InterPro"/>
</dbReference>
<dbReference type="Gene3D" id="1.10.1200.10">
    <property type="entry name" value="ACP-like"/>
    <property type="match status" value="1"/>
</dbReference>
<dbReference type="HAMAP" id="MF_01217">
    <property type="entry name" value="Acyl_carrier"/>
    <property type="match status" value="1"/>
</dbReference>
<dbReference type="InterPro" id="IPR003231">
    <property type="entry name" value="ACP"/>
</dbReference>
<dbReference type="InterPro" id="IPR036736">
    <property type="entry name" value="ACP-like_sf"/>
</dbReference>
<dbReference type="InterPro" id="IPR044813">
    <property type="entry name" value="ACP_chloroplastic"/>
</dbReference>
<dbReference type="InterPro" id="IPR020806">
    <property type="entry name" value="PKS_PP-bd"/>
</dbReference>
<dbReference type="InterPro" id="IPR009081">
    <property type="entry name" value="PP-bd_ACP"/>
</dbReference>
<dbReference type="InterPro" id="IPR006162">
    <property type="entry name" value="Ppantetheine_attach_site"/>
</dbReference>
<dbReference type="NCBIfam" id="TIGR00517">
    <property type="entry name" value="acyl_carrier"/>
    <property type="match status" value="1"/>
</dbReference>
<dbReference type="NCBIfam" id="NF002148">
    <property type="entry name" value="PRK00982.1-2"/>
    <property type="match status" value="1"/>
</dbReference>
<dbReference type="PANTHER" id="PTHR46153">
    <property type="entry name" value="ACYL CARRIER PROTEIN"/>
    <property type="match status" value="1"/>
</dbReference>
<dbReference type="PANTHER" id="PTHR46153:SF6">
    <property type="entry name" value="ACYL CARRIER PROTEIN"/>
    <property type="match status" value="1"/>
</dbReference>
<dbReference type="Pfam" id="PF00550">
    <property type="entry name" value="PP-binding"/>
    <property type="match status" value="1"/>
</dbReference>
<dbReference type="SMART" id="SM00823">
    <property type="entry name" value="PKS_PP"/>
    <property type="match status" value="1"/>
</dbReference>
<dbReference type="SUPFAM" id="SSF47336">
    <property type="entry name" value="ACP-like"/>
    <property type="match status" value="1"/>
</dbReference>
<dbReference type="PROSITE" id="PS50075">
    <property type="entry name" value="CARRIER"/>
    <property type="match status" value="1"/>
</dbReference>
<dbReference type="PROSITE" id="PS00012">
    <property type="entry name" value="PHOSPHOPANTETHEINE"/>
    <property type="match status" value="1"/>
</dbReference>
<sequence>MASAAASAVSFARPVKAICVNSVSFSALRKDNVSFRLQPVPQRFSVCCAAKKETVEKVCDIVKSQLALSDDTEVSGSSTFADLGADSLDTVEIVMGLEEAFGISVEESSAQTIATVEDAANLIDSLVGK</sequence>
<keyword id="KW-0150">Chloroplast</keyword>
<keyword id="KW-0903">Direct protein sequencing</keyword>
<keyword id="KW-0275">Fatty acid biosynthesis</keyword>
<keyword id="KW-0276">Fatty acid metabolism</keyword>
<keyword id="KW-0444">Lipid biosynthesis</keyword>
<keyword id="KW-0443">Lipid metabolism</keyword>
<keyword id="KW-0596">Phosphopantetheine</keyword>
<keyword id="KW-0597">Phosphoprotein</keyword>
<keyword id="KW-0934">Plastid</keyword>
<keyword id="KW-0809">Transit peptide</keyword>
<organism>
    <name type="scientific">Hordeum vulgare</name>
    <name type="common">Barley</name>
    <dbReference type="NCBI Taxonomy" id="4513"/>
    <lineage>
        <taxon>Eukaryota</taxon>
        <taxon>Viridiplantae</taxon>
        <taxon>Streptophyta</taxon>
        <taxon>Embryophyta</taxon>
        <taxon>Tracheophyta</taxon>
        <taxon>Spermatophyta</taxon>
        <taxon>Magnoliopsida</taxon>
        <taxon>Liliopsida</taxon>
        <taxon>Poales</taxon>
        <taxon>Poaceae</taxon>
        <taxon>BOP clade</taxon>
        <taxon>Pooideae</taxon>
        <taxon>Triticodae</taxon>
        <taxon>Triticeae</taxon>
        <taxon>Hordeinae</taxon>
        <taxon>Hordeum</taxon>
    </lineage>
</organism>